<feature type="chain" id="PRO_0000124952" description="Large ribosomal subunit protein uL5">
    <location>
        <begin position="1"/>
        <end position="187"/>
    </location>
</feature>
<proteinExistence type="inferred from homology"/>
<comment type="function">
    <text evidence="1">This is one of the proteins that bind and probably mediate the attachment of the 5S RNA into the large ribosomal subunit, where it forms part of the central protuberance. In the 70S ribosome it contacts protein S13 of the 30S subunit (bridge B1b), connecting the 2 subunits; this bridge is implicated in subunit movement. Contacts the P site tRNA; the 5S rRNA and some of its associated proteins might help stabilize positioning of ribosome-bound tRNAs.</text>
</comment>
<comment type="subunit">
    <text evidence="1">Part of the 50S ribosomal subunit; part of the 5S rRNA/L5/L18/L25 subcomplex. Contacts the 5S rRNA and the P site tRNA. Forms a bridge to the 30S subunit in the 70S ribosome.</text>
</comment>
<comment type="similarity">
    <text evidence="1">Belongs to the universal ribosomal protein uL5 family.</text>
</comment>
<accession>Q73S97</accession>
<gene>
    <name evidence="1" type="primary">rplE</name>
    <name type="ordered locus">MAP_4179</name>
</gene>
<sequence>MTTTEKVQPRLKERYRNEIRDSLQQQFGSANVMQIPTVTKVVVNMGIGEAARDAKLINGAVNDLALITGQRPEIRRARKSIAQFKLREGMPIGARVTLRGDRMWEFLDRLTSIALPRIRDFRGLSSKQFDGVGNYTFGLAEQSVFHEIDVDKIDRVRGMDINVVTSATTDDEGRALLRALGFPFKEN</sequence>
<evidence type="ECO:0000255" key="1">
    <source>
        <dbReference type="HAMAP-Rule" id="MF_01333"/>
    </source>
</evidence>
<evidence type="ECO:0000305" key="2"/>
<dbReference type="EMBL" id="AE016958">
    <property type="protein sequence ID" value="AAS06729.1"/>
    <property type="molecule type" value="Genomic_DNA"/>
</dbReference>
<dbReference type="RefSeq" id="WP_003879449.1">
    <property type="nucleotide sequence ID" value="NZ_CP106873.1"/>
</dbReference>
<dbReference type="SMR" id="Q73S97"/>
<dbReference type="STRING" id="262316.MAP_4179"/>
<dbReference type="KEGG" id="mpa:MAP_4179"/>
<dbReference type="PATRIC" id="fig|262316.17.peg.4451"/>
<dbReference type="eggNOG" id="COG0094">
    <property type="taxonomic scope" value="Bacteria"/>
</dbReference>
<dbReference type="HOGENOM" id="CLU_061015_2_1_11"/>
<dbReference type="Proteomes" id="UP000000580">
    <property type="component" value="Chromosome"/>
</dbReference>
<dbReference type="GO" id="GO:1990904">
    <property type="term" value="C:ribonucleoprotein complex"/>
    <property type="evidence" value="ECO:0007669"/>
    <property type="project" value="UniProtKB-KW"/>
</dbReference>
<dbReference type="GO" id="GO:0005840">
    <property type="term" value="C:ribosome"/>
    <property type="evidence" value="ECO:0007669"/>
    <property type="project" value="UniProtKB-KW"/>
</dbReference>
<dbReference type="GO" id="GO:0019843">
    <property type="term" value="F:rRNA binding"/>
    <property type="evidence" value="ECO:0007669"/>
    <property type="project" value="UniProtKB-UniRule"/>
</dbReference>
<dbReference type="GO" id="GO:0003735">
    <property type="term" value="F:structural constituent of ribosome"/>
    <property type="evidence" value="ECO:0007669"/>
    <property type="project" value="InterPro"/>
</dbReference>
<dbReference type="GO" id="GO:0000049">
    <property type="term" value="F:tRNA binding"/>
    <property type="evidence" value="ECO:0007669"/>
    <property type="project" value="UniProtKB-UniRule"/>
</dbReference>
<dbReference type="GO" id="GO:0006412">
    <property type="term" value="P:translation"/>
    <property type="evidence" value="ECO:0007669"/>
    <property type="project" value="UniProtKB-UniRule"/>
</dbReference>
<dbReference type="FunFam" id="3.30.1440.10:FF:000001">
    <property type="entry name" value="50S ribosomal protein L5"/>
    <property type="match status" value="1"/>
</dbReference>
<dbReference type="Gene3D" id="3.30.1440.10">
    <property type="match status" value="1"/>
</dbReference>
<dbReference type="HAMAP" id="MF_01333_B">
    <property type="entry name" value="Ribosomal_uL5_B"/>
    <property type="match status" value="1"/>
</dbReference>
<dbReference type="InterPro" id="IPR002132">
    <property type="entry name" value="Ribosomal_uL5"/>
</dbReference>
<dbReference type="InterPro" id="IPR020930">
    <property type="entry name" value="Ribosomal_uL5_bac-type"/>
</dbReference>
<dbReference type="InterPro" id="IPR031309">
    <property type="entry name" value="Ribosomal_uL5_C"/>
</dbReference>
<dbReference type="InterPro" id="IPR022803">
    <property type="entry name" value="Ribosomal_uL5_dom_sf"/>
</dbReference>
<dbReference type="InterPro" id="IPR031310">
    <property type="entry name" value="Ribosomal_uL5_N"/>
</dbReference>
<dbReference type="NCBIfam" id="NF000585">
    <property type="entry name" value="PRK00010.1"/>
    <property type="match status" value="1"/>
</dbReference>
<dbReference type="PANTHER" id="PTHR11994">
    <property type="entry name" value="60S RIBOSOMAL PROTEIN L11-RELATED"/>
    <property type="match status" value="1"/>
</dbReference>
<dbReference type="Pfam" id="PF00281">
    <property type="entry name" value="Ribosomal_L5"/>
    <property type="match status" value="1"/>
</dbReference>
<dbReference type="Pfam" id="PF00673">
    <property type="entry name" value="Ribosomal_L5_C"/>
    <property type="match status" value="1"/>
</dbReference>
<dbReference type="PIRSF" id="PIRSF002161">
    <property type="entry name" value="Ribosomal_L5"/>
    <property type="match status" value="1"/>
</dbReference>
<dbReference type="SUPFAM" id="SSF55282">
    <property type="entry name" value="RL5-like"/>
    <property type="match status" value="1"/>
</dbReference>
<name>RL5_MYCPA</name>
<keyword id="KW-1185">Reference proteome</keyword>
<keyword id="KW-0687">Ribonucleoprotein</keyword>
<keyword id="KW-0689">Ribosomal protein</keyword>
<keyword id="KW-0694">RNA-binding</keyword>
<keyword id="KW-0699">rRNA-binding</keyword>
<keyword id="KW-0820">tRNA-binding</keyword>
<reference key="1">
    <citation type="journal article" date="2005" name="Proc. Natl. Acad. Sci. U.S.A.">
        <title>The complete genome sequence of Mycobacterium avium subspecies paratuberculosis.</title>
        <authorList>
            <person name="Li L."/>
            <person name="Bannantine J.P."/>
            <person name="Zhang Q."/>
            <person name="Amonsin A."/>
            <person name="May B.J."/>
            <person name="Alt D."/>
            <person name="Banerji N."/>
            <person name="Kanjilal S."/>
            <person name="Kapur V."/>
        </authorList>
    </citation>
    <scope>NUCLEOTIDE SEQUENCE [LARGE SCALE GENOMIC DNA]</scope>
    <source>
        <strain>ATCC BAA-968 / K-10</strain>
    </source>
</reference>
<organism>
    <name type="scientific">Mycolicibacterium paratuberculosis (strain ATCC BAA-968 / K-10)</name>
    <name type="common">Mycobacterium paratuberculosis</name>
    <dbReference type="NCBI Taxonomy" id="262316"/>
    <lineage>
        <taxon>Bacteria</taxon>
        <taxon>Bacillati</taxon>
        <taxon>Actinomycetota</taxon>
        <taxon>Actinomycetes</taxon>
        <taxon>Mycobacteriales</taxon>
        <taxon>Mycobacteriaceae</taxon>
        <taxon>Mycobacterium</taxon>
        <taxon>Mycobacterium avium complex (MAC)</taxon>
    </lineage>
</organism>
<protein>
    <recommendedName>
        <fullName evidence="1">Large ribosomal subunit protein uL5</fullName>
    </recommendedName>
    <alternativeName>
        <fullName evidence="2">50S ribosomal protein L5</fullName>
    </alternativeName>
</protein>